<evidence type="ECO:0000250" key="1"/>
<evidence type="ECO:0000255" key="2"/>
<evidence type="ECO:0000255" key="3">
    <source>
        <dbReference type="PROSITE-ProRule" id="PRU01161"/>
    </source>
</evidence>
<evidence type="ECO:0000256" key="4">
    <source>
        <dbReference type="SAM" id="MobiDB-lite"/>
    </source>
</evidence>
<evidence type="ECO:0000305" key="5"/>
<gene>
    <name type="primary">NTE1</name>
    <name type="ORF">SNOG_08222</name>
</gene>
<protein>
    <recommendedName>
        <fullName>Lysophospholipase NTE1</fullName>
        <ecNumber>3.1.1.5</ecNumber>
    </recommendedName>
    <alternativeName>
        <fullName>Intracellular phospholipase B</fullName>
    </alternativeName>
    <alternativeName>
        <fullName>Neuropathy target esterase homolog</fullName>
    </alternativeName>
</protein>
<keyword id="KW-0256">Endoplasmic reticulum</keyword>
<keyword id="KW-0378">Hydrolase</keyword>
<keyword id="KW-0442">Lipid degradation</keyword>
<keyword id="KW-0443">Lipid metabolism</keyword>
<keyword id="KW-0472">Membrane</keyword>
<keyword id="KW-0677">Repeat</keyword>
<keyword id="KW-0812">Transmembrane</keyword>
<keyword id="KW-1133">Transmembrane helix</keyword>
<dbReference type="EC" id="3.1.1.5"/>
<dbReference type="EMBL" id="CH445336">
    <property type="protein sequence ID" value="EAT84498.2"/>
    <property type="status" value="ALT_SEQ"/>
    <property type="molecule type" value="Genomic_DNA"/>
</dbReference>
<dbReference type="RefSeq" id="XP_001798544.1">
    <property type="nucleotide sequence ID" value="XM_001798492.1"/>
</dbReference>
<dbReference type="SMR" id="Q0UJ42"/>
<dbReference type="FunCoup" id="Q0UJ42">
    <property type="interactions" value="105"/>
</dbReference>
<dbReference type="STRING" id="321614.Q0UJ42"/>
<dbReference type="GeneID" id="5975442"/>
<dbReference type="KEGG" id="pno:SNOG_08222"/>
<dbReference type="VEuPathDB" id="FungiDB:JI435_082220"/>
<dbReference type="eggNOG" id="KOG2968">
    <property type="taxonomic scope" value="Eukaryota"/>
</dbReference>
<dbReference type="InParanoid" id="Q0UJ42"/>
<dbReference type="OMA" id="SSGYVWR"/>
<dbReference type="OrthoDB" id="421051at2759"/>
<dbReference type="Proteomes" id="UP000001055">
    <property type="component" value="Unassembled WGS sequence"/>
</dbReference>
<dbReference type="GO" id="GO:0005783">
    <property type="term" value="C:endoplasmic reticulum"/>
    <property type="evidence" value="ECO:0000318"/>
    <property type="project" value="GO_Central"/>
</dbReference>
<dbReference type="GO" id="GO:0005789">
    <property type="term" value="C:endoplasmic reticulum membrane"/>
    <property type="evidence" value="ECO:0007669"/>
    <property type="project" value="UniProtKB-SubCell"/>
</dbReference>
<dbReference type="GO" id="GO:0004622">
    <property type="term" value="F:lysophospholipase activity"/>
    <property type="evidence" value="ECO:0000318"/>
    <property type="project" value="GO_Central"/>
</dbReference>
<dbReference type="GO" id="GO:0046486">
    <property type="term" value="P:glycerolipid metabolic process"/>
    <property type="evidence" value="ECO:0007669"/>
    <property type="project" value="UniProtKB-ARBA"/>
</dbReference>
<dbReference type="GO" id="GO:0016042">
    <property type="term" value="P:lipid catabolic process"/>
    <property type="evidence" value="ECO:0007669"/>
    <property type="project" value="UniProtKB-KW"/>
</dbReference>
<dbReference type="CDD" id="cd00038">
    <property type="entry name" value="CAP_ED"/>
    <property type="match status" value="2"/>
</dbReference>
<dbReference type="FunFam" id="2.60.120.10:FF:000062">
    <property type="entry name" value="Lysophospholipase NTE1"/>
    <property type="match status" value="1"/>
</dbReference>
<dbReference type="FunFam" id="3.40.1090.10:FF:000007">
    <property type="entry name" value="Lysophospholipase NTE1"/>
    <property type="match status" value="1"/>
</dbReference>
<dbReference type="FunFam" id="3.40.1090.10:FF:000018">
    <property type="entry name" value="Lysophospholipase NTE1"/>
    <property type="match status" value="1"/>
</dbReference>
<dbReference type="Gene3D" id="3.40.1090.10">
    <property type="entry name" value="Cytosolic phospholipase A2 catalytic domain"/>
    <property type="match status" value="2"/>
</dbReference>
<dbReference type="Gene3D" id="2.60.120.10">
    <property type="entry name" value="Jelly Rolls"/>
    <property type="match status" value="3"/>
</dbReference>
<dbReference type="InterPro" id="IPR016035">
    <property type="entry name" value="Acyl_Trfase/lysoPLipase"/>
</dbReference>
<dbReference type="InterPro" id="IPR000595">
    <property type="entry name" value="cNMP-bd_dom"/>
</dbReference>
<dbReference type="InterPro" id="IPR018490">
    <property type="entry name" value="cNMP-bd_dom_sf"/>
</dbReference>
<dbReference type="InterPro" id="IPR050301">
    <property type="entry name" value="NTE"/>
</dbReference>
<dbReference type="InterPro" id="IPR056556">
    <property type="entry name" value="NTE1_P-loop_dom"/>
</dbReference>
<dbReference type="InterPro" id="IPR002641">
    <property type="entry name" value="PNPLA_dom"/>
</dbReference>
<dbReference type="InterPro" id="IPR014710">
    <property type="entry name" value="RmlC-like_jellyroll"/>
</dbReference>
<dbReference type="PANTHER" id="PTHR14226:SF29">
    <property type="entry name" value="NEUROPATHY TARGET ESTERASE SWS"/>
    <property type="match status" value="1"/>
</dbReference>
<dbReference type="PANTHER" id="PTHR14226">
    <property type="entry name" value="NEUROPATHY TARGET ESTERASE/SWISS CHEESE D.MELANOGASTER"/>
    <property type="match status" value="1"/>
</dbReference>
<dbReference type="Pfam" id="PF00027">
    <property type="entry name" value="cNMP_binding"/>
    <property type="match status" value="1"/>
</dbReference>
<dbReference type="Pfam" id="PF24179">
    <property type="entry name" value="NTE_Ploop"/>
    <property type="match status" value="1"/>
</dbReference>
<dbReference type="Pfam" id="PF01734">
    <property type="entry name" value="Patatin"/>
    <property type="match status" value="1"/>
</dbReference>
<dbReference type="SMART" id="SM00100">
    <property type="entry name" value="cNMP"/>
    <property type="match status" value="2"/>
</dbReference>
<dbReference type="SUPFAM" id="SSF51206">
    <property type="entry name" value="cAMP-binding domain-like"/>
    <property type="match status" value="3"/>
</dbReference>
<dbReference type="SUPFAM" id="SSF52151">
    <property type="entry name" value="FabD/lysophospholipase-like"/>
    <property type="match status" value="1"/>
</dbReference>
<dbReference type="PROSITE" id="PS50042">
    <property type="entry name" value="CNMP_BINDING_3"/>
    <property type="match status" value="2"/>
</dbReference>
<dbReference type="PROSITE" id="PS51635">
    <property type="entry name" value="PNPLA"/>
    <property type="match status" value="1"/>
</dbReference>
<accession>Q0UJ42</accession>
<organism>
    <name type="scientific">Phaeosphaeria nodorum (strain SN15 / ATCC MYA-4574 / FGSC 10173)</name>
    <name type="common">Glume blotch fungus</name>
    <name type="synonym">Parastagonospora nodorum</name>
    <dbReference type="NCBI Taxonomy" id="321614"/>
    <lineage>
        <taxon>Eukaryota</taxon>
        <taxon>Fungi</taxon>
        <taxon>Dikarya</taxon>
        <taxon>Ascomycota</taxon>
        <taxon>Pezizomycotina</taxon>
        <taxon>Dothideomycetes</taxon>
        <taxon>Pleosporomycetidae</taxon>
        <taxon>Pleosporales</taxon>
        <taxon>Pleosporineae</taxon>
        <taxon>Phaeosphaeriaceae</taxon>
        <taxon>Parastagonospora</taxon>
    </lineage>
</organism>
<reference key="1">
    <citation type="journal article" date="2007" name="Plant Cell">
        <title>Dothideomycete-plant interactions illuminated by genome sequencing and EST analysis of the wheat pathogen Stagonospora nodorum.</title>
        <authorList>
            <person name="Hane J.K."/>
            <person name="Lowe R.G.T."/>
            <person name="Solomon P.S."/>
            <person name="Tan K.-C."/>
            <person name="Schoch C.L."/>
            <person name="Spatafora J.W."/>
            <person name="Crous P.W."/>
            <person name="Kodira C.D."/>
            <person name="Birren B.W."/>
            <person name="Galagan J.E."/>
            <person name="Torriani S.F.F."/>
            <person name="McDonald B.A."/>
            <person name="Oliver R.P."/>
        </authorList>
    </citation>
    <scope>NUCLEOTIDE SEQUENCE [LARGE SCALE GENOMIC DNA]</scope>
    <source>
        <strain>SN15 / ATCC MYA-4574 / FGSC 10173</strain>
    </source>
</reference>
<feature type="chain" id="PRO_0000295327" description="Lysophospholipase NTE1">
    <location>
        <begin position="1"/>
        <end position="1512"/>
    </location>
</feature>
<feature type="topological domain" description="Cytoplasmic" evidence="1">
    <location>
        <begin position="1"/>
        <end position="48"/>
    </location>
</feature>
<feature type="transmembrane region" description="Helical" evidence="2">
    <location>
        <begin position="49"/>
        <end position="69"/>
    </location>
</feature>
<feature type="topological domain" description="Lumenal" evidence="1">
    <location>
        <begin position="70"/>
        <end position="83"/>
    </location>
</feature>
<feature type="transmembrane region" description="Helical" evidence="2">
    <location>
        <begin position="84"/>
        <end position="104"/>
    </location>
</feature>
<feature type="topological domain" description="Cytoplasmic" evidence="1">
    <location>
        <begin position="105"/>
        <end position="1512"/>
    </location>
</feature>
<feature type="domain" description="PNPLA" evidence="3">
    <location>
        <begin position="1209"/>
        <end position="1373"/>
    </location>
</feature>
<feature type="region of interest" description="Disordered" evidence="4">
    <location>
        <begin position="204"/>
        <end position="230"/>
    </location>
</feature>
<feature type="region of interest" description="Disordered" evidence="4">
    <location>
        <begin position="262"/>
        <end position="362"/>
    </location>
</feature>
<feature type="region of interest" description="Disordered" evidence="4">
    <location>
        <begin position="534"/>
        <end position="556"/>
    </location>
</feature>
<feature type="region of interest" description="Disordered" evidence="4">
    <location>
        <begin position="740"/>
        <end position="770"/>
    </location>
</feature>
<feature type="short sequence motif" description="GXGXXG" evidence="3">
    <location>
        <begin position="1213"/>
        <end position="1218"/>
    </location>
</feature>
<feature type="short sequence motif" description="GXSXG" evidence="3">
    <location>
        <begin position="1240"/>
        <end position="1244"/>
    </location>
</feature>
<feature type="short sequence motif" description="DGA/G" evidence="3">
    <location>
        <begin position="1360"/>
        <end position="1362"/>
    </location>
</feature>
<feature type="compositionally biased region" description="Acidic residues" evidence="4">
    <location>
        <begin position="208"/>
        <end position="217"/>
    </location>
</feature>
<feature type="compositionally biased region" description="Polar residues" evidence="4">
    <location>
        <begin position="268"/>
        <end position="291"/>
    </location>
</feature>
<feature type="compositionally biased region" description="Basic residues" evidence="4">
    <location>
        <begin position="343"/>
        <end position="358"/>
    </location>
</feature>
<feature type="compositionally biased region" description="Low complexity" evidence="4">
    <location>
        <begin position="537"/>
        <end position="549"/>
    </location>
</feature>
<feature type="compositionally biased region" description="Polar residues" evidence="4">
    <location>
        <begin position="751"/>
        <end position="761"/>
    </location>
</feature>
<feature type="active site" description="Nucleophile" evidence="3">
    <location>
        <position position="1242"/>
    </location>
</feature>
<feature type="active site" description="Proton acceptor" evidence="3">
    <location>
        <position position="1360"/>
    </location>
</feature>
<feature type="binding site">
    <location>
        <begin position="669"/>
        <end position="793"/>
    </location>
    <ligand>
        <name>a nucleoside 3',5'-cyclic phosphate</name>
        <dbReference type="ChEBI" id="CHEBI:58464"/>
        <label>1</label>
    </ligand>
</feature>
<feature type="binding site">
    <location>
        <begin position="830"/>
        <end position="950"/>
    </location>
    <ligand>
        <name>a nucleoside 3',5'-cyclic phosphate</name>
        <dbReference type="ChEBI" id="CHEBI:58464"/>
        <label>2</label>
    </ligand>
</feature>
<name>NTE1_PHANO</name>
<proteinExistence type="inferred from homology"/>
<sequence length="1512" mass="166935">MAAPDAMTSLVKSSVALLSSAHESLPTSLAAMKTAETAPSSTFGILGRVILSILSVLPTLLFWVSYTLPTWLFTLFSMSLTFTMNFTTLMLVLVFVVSTISYFVRYRYLTMYARLPPEPQREEPQVEVFPESQEGDSKRGLSNYLDEFLSAIKVFGYLERPVFHELTRTMQTRRLAAGETILLEEEKGFCLVVDGLVQIFVKSNREESDSDEDDGELQGESGGGSAQAHRQGYQLLTEVKNGAPMSSLFSILSLFTEDVKLRHDEDSGPSSSTPMSPQHRPSMTRNSSFNMDDSRPETPIEAQEATIRRRRTSALASPTAGGRLSNVPPLSLDTDGFNDNFKHSKQRRSPSRSTKPKSAHPDIVARATVDTTIAIIPATAFRRLTRIYPKATAHIVQVILTRLQRVTLATSHAYLSLTNEVLRTEKLMNKYTTYDLPGFLRDAPLERLKEKFTKETERLGSDEGMKGIALHNPGAGRRRRTSVSIRSSTAAQARLAAARGTSIGSNVEAISRLTSPEQGMRNDRISAGDLLTNTQMSRGTGRSGRSSFSQPYQHDVRRDARTPLDASGFNPFASPSMRPNLHRQESIDEATVFRESVLGCMFKAIGLTSPENPVPRPAASVEQSPRLVSFDAKRQKAIFTSAFGFMDPYEASRDGDADSVASASNLSTLSASGNGNLLEEVVNDVEIVFFPKDAVLVEQGERNPGLYYVIDGFLDVSVAVEEDSSESNVLGTLPTGPAVTEDDLFGPPLQPTATNTSLRNGENSKKKRSRKSLFMTRPGGLAGYLGTVSSNRSFVDVTAKTDVYVGFLPRASIERIVERYPVVLLTMAKRLTTLLPRLIQHIDFALEWVQVNAGQVIYNQGEESDAIYIVLNGRLRAIKDAENGKVTVIGEYGQGDSVGELEVLTETARPGSLHAIRDTELAKFPKTLFNSLALEHPGITIKISKIIASRMRALVDDPLHEQSKERSNKATRTNVSSTVNLRTVAILPVTAGIPVVDFASRLMNALNQIGVPRGVVSLNQAAILNHLGRHAFNRMGKLKLSQYLADLEEKYGMVLYVADTPVKSPWTQTCISQADCILLVGLAESSPNIGEYERFLLTTKTTARKELVLLHAERYCPSGLTRKWLRNWPWINGSHHHMQMSFRATAEPVHQTGRRLGNAIKQRVQVIQAEIQKYTSKRVRQTPLYSADTPFKGDFHRLARRLCGKSVGLVLGGGGARGISQIGIIRALEEAGIPIDIVGGTSIGSFIGALYAWDADVVPMYGRAKKFSGRMGSMWRFALDLTYPSASYTTGHEFNRGIFKTFGNSQIEDFWLEFYCNTTNISKSRSEIHTSGYVWRYVRASMSLAGLLPPLCDNGSMLLDGGYIDNLTVAHMKSLGADVIFAIDVGSLDEDTPQAFGDSLSGFWATFNRWNPFSTHANPPTLSEIQSRLAYVSSIDALERAKNTPGCRYMRPPIDPYGTLDFAKFEEIYEVGYKYGKGFLAQLREQGVLPVTEETEKEKNLRRTMAPRRASI</sequence>
<comment type="function">
    <text evidence="1">Intracellular phospholipase B that catalyzes the double deacylation of phosphatidylcholine (PC) to glycerophosphocholine (GroPCho). Plays an important role in membrane lipid homeostasis. Responsible for the rapid PC turnover in response to inositol, elevated temperatures, or when choline is present in the growth medium (By similarity).</text>
</comment>
<comment type="catalytic activity">
    <reaction>
        <text>a 1-acyl-sn-glycero-3-phosphocholine + H2O = sn-glycerol 3-phosphocholine + a fatty acid + H(+)</text>
        <dbReference type="Rhea" id="RHEA:15177"/>
        <dbReference type="ChEBI" id="CHEBI:15377"/>
        <dbReference type="ChEBI" id="CHEBI:15378"/>
        <dbReference type="ChEBI" id="CHEBI:16870"/>
        <dbReference type="ChEBI" id="CHEBI:28868"/>
        <dbReference type="ChEBI" id="CHEBI:58168"/>
        <dbReference type="EC" id="3.1.1.5"/>
    </reaction>
</comment>
<comment type="activity regulation">
    <text evidence="1">Inhibited by organophosphorus esters.</text>
</comment>
<comment type="subcellular location">
    <subcellularLocation>
        <location evidence="1">Endoplasmic reticulum membrane</location>
        <topology evidence="1">Multi-pass membrane protein</topology>
    </subcellularLocation>
</comment>
<comment type="similarity">
    <text evidence="5">Belongs to the NTE family.</text>
</comment>
<comment type="sequence caution" evidence="5">
    <conflict type="erroneous gene model prediction">
        <sequence resource="EMBL-CDS" id="EAT84498"/>
    </conflict>
</comment>